<organism>
    <name type="scientific">Streptococcus pyogenes serotype M6 (strain ATCC BAA-946 / MGAS10394)</name>
    <dbReference type="NCBI Taxonomy" id="286636"/>
    <lineage>
        <taxon>Bacteria</taxon>
        <taxon>Bacillati</taxon>
        <taxon>Bacillota</taxon>
        <taxon>Bacilli</taxon>
        <taxon>Lactobacillales</taxon>
        <taxon>Streptococcaceae</taxon>
        <taxon>Streptococcus</taxon>
    </lineage>
</organism>
<evidence type="ECO:0000255" key="1">
    <source>
        <dbReference type="HAMAP-Rule" id="MF_00022"/>
    </source>
</evidence>
<feature type="chain" id="PRO_0000119669" description="Glutamate--tRNA ligase">
    <location>
        <begin position="1"/>
        <end position="481"/>
    </location>
</feature>
<feature type="short sequence motif" description="'HIGH' region" evidence="1">
    <location>
        <begin position="11"/>
        <end position="21"/>
    </location>
</feature>
<feature type="short sequence motif" description="'KMSKS' region" evidence="1">
    <location>
        <begin position="255"/>
        <end position="259"/>
    </location>
</feature>
<feature type="binding site" evidence="1">
    <location>
        <position position="258"/>
    </location>
    <ligand>
        <name>ATP</name>
        <dbReference type="ChEBI" id="CHEBI:30616"/>
    </ligand>
</feature>
<comment type="function">
    <text evidence="1">Catalyzes the attachment of glutamate to tRNA(Glu) in a two-step reaction: glutamate is first activated by ATP to form Glu-AMP and then transferred to the acceptor end of tRNA(Glu).</text>
</comment>
<comment type="catalytic activity">
    <reaction evidence="1">
        <text>tRNA(Glu) + L-glutamate + ATP = L-glutamyl-tRNA(Glu) + AMP + diphosphate</text>
        <dbReference type="Rhea" id="RHEA:23540"/>
        <dbReference type="Rhea" id="RHEA-COMP:9663"/>
        <dbReference type="Rhea" id="RHEA-COMP:9680"/>
        <dbReference type="ChEBI" id="CHEBI:29985"/>
        <dbReference type="ChEBI" id="CHEBI:30616"/>
        <dbReference type="ChEBI" id="CHEBI:33019"/>
        <dbReference type="ChEBI" id="CHEBI:78442"/>
        <dbReference type="ChEBI" id="CHEBI:78520"/>
        <dbReference type="ChEBI" id="CHEBI:456215"/>
        <dbReference type="EC" id="6.1.1.17"/>
    </reaction>
</comment>
<comment type="subunit">
    <text evidence="1">Monomer.</text>
</comment>
<comment type="subcellular location">
    <subcellularLocation>
        <location evidence="1">Cytoplasm</location>
    </subcellularLocation>
</comment>
<comment type="similarity">
    <text evidence="1">Belongs to the class-I aminoacyl-tRNA synthetase family. Glutamate--tRNA ligase type 1 subfamily.</text>
</comment>
<reference key="1">
    <citation type="journal article" date="2004" name="J. Infect. Dis.">
        <title>Progress toward characterization of the group A Streptococcus metagenome: complete genome sequence of a macrolide-resistant serotype M6 strain.</title>
        <authorList>
            <person name="Banks D.J."/>
            <person name="Porcella S.F."/>
            <person name="Barbian K.D."/>
            <person name="Beres S.B."/>
            <person name="Philips L.E."/>
            <person name="Voyich J.M."/>
            <person name="DeLeo F.R."/>
            <person name="Martin J.M."/>
            <person name="Somerville G.A."/>
            <person name="Musser J.M."/>
        </authorList>
    </citation>
    <scope>NUCLEOTIDE SEQUENCE [LARGE SCALE GENOMIC DNA]</scope>
    <source>
        <strain>ATCC BAA-946 / MGAS10394</strain>
    </source>
</reference>
<sequence>MSKPIRVRYAPSPTGLLHIGNARTALFNYLYARRHGGTFIIRIEDTDRKRHVEDGERSQLENLKWLGMDWDESPETHENYRQSERLALYQQYIDQLLAEGKAYKSYVTEEELAAERERQEAAGETPRYINEFIGMSADEKAKYIAEREAAGIVPTVRLAVNESGIYKWTDMVKGDIEFEGGNIGGDWVIQKKDGYPTYNFAVVVDDHDMQISHVIRGDDHIANTPKQLMVYEALGWEAPEFGHMTLIINSETGKKLSKRDTNTLQFIEDYRKKGYMPEAVFNFIALLGWNPGGEEEIFSREQLIALFDENRLSKSPAAFDQKKMDWMSNEYLKHADFETVYALCKPFLEEAGRLTEKAEKLVELYKPQLKSADEIIPLTDLFFSDFPELTEAEKEVMAGETVSTVLQAFKAKLEAMSDEDFKPENIFPQIKAVQKETGIKGKNLFMPIRIAVSGEMHGPELPNTIYLLGRDKSIEHIKNML</sequence>
<keyword id="KW-0030">Aminoacyl-tRNA synthetase</keyword>
<keyword id="KW-0067">ATP-binding</keyword>
<keyword id="KW-0963">Cytoplasm</keyword>
<keyword id="KW-0436">Ligase</keyword>
<keyword id="KW-0547">Nucleotide-binding</keyword>
<keyword id="KW-0648">Protein biosynthesis</keyword>
<proteinExistence type="inferred from homology"/>
<gene>
    <name evidence="1" type="primary">gltX</name>
    <name type="ordered locus">M6_Spy0234</name>
</gene>
<name>SYE_STRP6</name>
<protein>
    <recommendedName>
        <fullName evidence="1">Glutamate--tRNA ligase</fullName>
        <ecNumber evidence="1">6.1.1.17</ecNumber>
    </recommendedName>
    <alternativeName>
        <fullName evidence="1">Glutamyl-tRNA synthetase</fullName>
        <shortName evidence="1">GluRS</shortName>
    </alternativeName>
</protein>
<dbReference type="EC" id="6.1.1.17" evidence="1"/>
<dbReference type="EMBL" id="CP000003">
    <property type="protein sequence ID" value="AAT86369.1"/>
    <property type="molecule type" value="Genomic_DNA"/>
</dbReference>
<dbReference type="RefSeq" id="WP_002986105.1">
    <property type="nucleotide sequence ID" value="NC_006086.1"/>
</dbReference>
<dbReference type="SMR" id="Q5XDZ4"/>
<dbReference type="KEGG" id="spa:M6_Spy0234"/>
<dbReference type="HOGENOM" id="CLU_015768_6_1_9"/>
<dbReference type="Proteomes" id="UP000001167">
    <property type="component" value="Chromosome"/>
</dbReference>
<dbReference type="GO" id="GO:0005829">
    <property type="term" value="C:cytosol"/>
    <property type="evidence" value="ECO:0007669"/>
    <property type="project" value="TreeGrafter"/>
</dbReference>
<dbReference type="GO" id="GO:0005524">
    <property type="term" value="F:ATP binding"/>
    <property type="evidence" value="ECO:0007669"/>
    <property type="project" value="UniProtKB-UniRule"/>
</dbReference>
<dbReference type="GO" id="GO:0004818">
    <property type="term" value="F:glutamate-tRNA ligase activity"/>
    <property type="evidence" value="ECO:0007669"/>
    <property type="project" value="UniProtKB-UniRule"/>
</dbReference>
<dbReference type="GO" id="GO:0000049">
    <property type="term" value="F:tRNA binding"/>
    <property type="evidence" value="ECO:0007669"/>
    <property type="project" value="InterPro"/>
</dbReference>
<dbReference type="GO" id="GO:0008270">
    <property type="term" value="F:zinc ion binding"/>
    <property type="evidence" value="ECO:0007669"/>
    <property type="project" value="InterPro"/>
</dbReference>
<dbReference type="GO" id="GO:0006424">
    <property type="term" value="P:glutamyl-tRNA aminoacylation"/>
    <property type="evidence" value="ECO:0007669"/>
    <property type="project" value="UniProtKB-UniRule"/>
</dbReference>
<dbReference type="CDD" id="cd00808">
    <property type="entry name" value="GluRS_core"/>
    <property type="match status" value="1"/>
</dbReference>
<dbReference type="FunFam" id="1.10.10.350:FF:000002">
    <property type="entry name" value="Glutamate--tRNA ligase"/>
    <property type="match status" value="1"/>
</dbReference>
<dbReference type="FunFam" id="3.40.50.620:FF:000007">
    <property type="entry name" value="Glutamate--tRNA ligase"/>
    <property type="match status" value="1"/>
</dbReference>
<dbReference type="Gene3D" id="1.10.10.350">
    <property type="match status" value="1"/>
</dbReference>
<dbReference type="Gene3D" id="3.40.50.620">
    <property type="entry name" value="HUPs"/>
    <property type="match status" value="1"/>
</dbReference>
<dbReference type="HAMAP" id="MF_00022">
    <property type="entry name" value="Glu_tRNA_synth_type1"/>
    <property type="match status" value="1"/>
</dbReference>
<dbReference type="InterPro" id="IPR045462">
    <property type="entry name" value="aa-tRNA-synth_I_cd-bd"/>
</dbReference>
<dbReference type="InterPro" id="IPR020751">
    <property type="entry name" value="aa-tRNA-synth_I_codon-bd_sub2"/>
</dbReference>
<dbReference type="InterPro" id="IPR001412">
    <property type="entry name" value="aa-tRNA-synth_I_CS"/>
</dbReference>
<dbReference type="InterPro" id="IPR008925">
    <property type="entry name" value="aa_tRNA-synth_I_cd-bd_sf"/>
</dbReference>
<dbReference type="InterPro" id="IPR004527">
    <property type="entry name" value="Glu-tRNA-ligase_bac/mito"/>
</dbReference>
<dbReference type="InterPro" id="IPR000924">
    <property type="entry name" value="Glu/Gln-tRNA-synth"/>
</dbReference>
<dbReference type="InterPro" id="IPR020058">
    <property type="entry name" value="Glu/Gln-tRNA-synth_Ib_cat-dom"/>
</dbReference>
<dbReference type="InterPro" id="IPR049940">
    <property type="entry name" value="GluQ/Sye"/>
</dbReference>
<dbReference type="InterPro" id="IPR033910">
    <property type="entry name" value="GluRS_core"/>
</dbReference>
<dbReference type="InterPro" id="IPR014729">
    <property type="entry name" value="Rossmann-like_a/b/a_fold"/>
</dbReference>
<dbReference type="NCBIfam" id="TIGR00464">
    <property type="entry name" value="gltX_bact"/>
    <property type="match status" value="1"/>
</dbReference>
<dbReference type="PANTHER" id="PTHR43311">
    <property type="entry name" value="GLUTAMATE--TRNA LIGASE"/>
    <property type="match status" value="1"/>
</dbReference>
<dbReference type="PANTHER" id="PTHR43311:SF2">
    <property type="entry name" value="GLUTAMATE--TRNA LIGASE, MITOCHONDRIAL-RELATED"/>
    <property type="match status" value="1"/>
</dbReference>
<dbReference type="Pfam" id="PF19269">
    <property type="entry name" value="Anticodon_2"/>
    <property type="match status" value="1"/>
</dbReference>
<dbReference type="Pfam" id="PF00749">
    <property type="entry name" value="tRNA-synt_1c"/>
    <property type="match status" value="1"/>
</dbReference>
<dbReference type="PRINTS" id="PR00987">
    <property type="entry name" value="TRNASYNTHGLU"/>
</dbReference>
<dbReference type="SUPFAM" id="SSF48163">
    <property type="entry name" value="An anticodon-binding domain of class I aminoacyl-tRNA synthetases"/>
    <property type="match status" value="1"/>
</dbReference>
<dbReference type="SUPFAM" id="SSF52374">
    <property type="entry name" value="Nucleotidylyl transferase"/>
    <property type="match status" value="1"/>
</dbReference>
<dbReference type="PROSITE" id="PS00178">
    <property type="entry name" value="AA_TRNA_LIGASE_I"/>
    <property type="match status" value="1"/>
</dbReference>
<accession>Q5XDZ4</accession>